<dbReference type="EMBL" id="CP000010">
    <property type="protein sequence ID" value="AAU47882.1"/>
    <property type="molecule type" value="Genomic_DNA"/>
</dbReference>
<dbReference type="RefSeq" id="WP_004198368.1">
    <property type="nucleotide sequence ID" value="NC_006348.1"/>
</dbReference>
<dbReference type="RefSeq" id="YP_104178.1">
    <property type="nucleotide sequence ID" value="NC_006348.1"/>
</dbReference>
<dbReference type="SMR" id="Q62GJ3"/>
<dbReference type="GeneID" id="93061845"/>
<dbReference type="KEGG" id="bma:BMA2645"/>
<dbReference type="PATRIC" id="fig|243160.12.peg.2718"/>
<dbReference type="eggNOG" id="COG0080">
    <property type="taxonomic scope" value="Bacteria"/>
</dbReference>
<dbReference type="HOGENOM" id="CLU_074237_2_0_4"/>
<dbReference type="Proteomes" id="UP000006693">
    <property type="component" value="Chromosome 1"/>
</dbReference>
<dbReference type="GO" id="GO:0022625">
    <property type="term" value="C:cytosolic large ribosomal subunit"/>
    <property type="evidence" value="ECO:0007669"/>
    <property type="project" value="TreeGrafter"/>
</dbReference>
<dbReference type="GO" id="GO:0070180">
    <property type="term" value="F:large ribosomal subunit rRNA binding"/>
    <property type="evidence" value="ECO:0007669"/>
    <property type="project" value="UniProtKB-UniRule"/>
</dbReference>
<dbReference type="GO" id="GO:0003735">
    <property type="term" value="F:structural constituent of ribosome"/>
    <property type="evidence" value="ECO:0007669"/>
    <property type="project" value="InterPro"/>
</dbReference>
<dbReference type="GO" id="GO:0006412">
    <property type="term" value="P:translation"/>
    <property type="evidence" value="ECO:0007669"/>
    <property type="project" value="UniProtKB-UniRule"/>
</dbReference>
<dbReference type="CDD" id="cd00349">
    <property type="entry name" value="Ribosomal_L11"/>
    <property type="match status" value="1"/>
</dbReference>
<dbReference type="FunFam" id="1.10.10.250:FF:000001">
    <property type="entry name" value="50S ribosomal protein L11"/>
    <property type="match status" value="1"/>
</dbReference>
<dbReference type="FunFam" id="3.30.1550.10:FF:000001">
    <property type="entry name" value="50S ribosomal protein L11"/>
    <property type="match status" value="1"/>
</dbReference>
<dbReference type="Gene3D" id="1.10.10.250">
    <property type="entry name" value="Ribosomal protein L11, C-terminal domain"/>
    <property type="match status" value="1"/>
</dbReference>
<dbReference type="Gene3D" id="3.30.1550.10">
    <property type="entry name" value="Ribosomal protein L11/L12, N-terminal domain"/>
    <property type="match status" value="1"/>
</dbReference>
<dbReference type="HAMAP" id="MF_00736">
    <property type="entry name" value="Ribosomal_uL11"/>
    <property type="match status" value="1"/>
</dbReference>
<dbReference type="InterPro" id="IPR000911">
    <property type="entry name" value="Ribosomal_uL11"/>
</dbReference>
<dbReference type="InterPro" id="IPR006519">
    <property type="entry name" value="Ribosomal_uL11_bac-typ"/>
</dbReference>
<dbReference type="InterPro" id="IPR020783">
    <property type="entry name" value="Ribosomal_uL11_C"/>
</dbReference>
<dbReference type="InterPro" id="IPR036769">
    <property type="entry name" value="Ribosomal_uL11_C_sf"/>
</dbReference>
<dbReference type="InterPro" id="IPR020785">
    <property type="entry name" value="Ribosomal_uL11_CS"/>
</dbReference>
<dbReference type="InterPro" id="IPR020784">
    <property type="entry name" value="Ribosomal_uL11_N"/>
</dbReference>
<dbReference type="InterPro" id="IPR036796">
    <property type="entry name" value="Ribosomal_uL11_N_sf"/>
</dbReference>
<dbReference type="NCBIfam" id="TIGR01632">
    <property type="entry name" value="L11_bact"/>
    <property type="match status" value="1"/>
</dbReference>
<dbReference type="PANTHER" id="PTHR11661">
    <property type="entry name" value="60S RIBOSOMAL PROTEIN L12"/>
    <property type="match status" value="1"/>
</dbReference>
<dbReference type="PANTHER" id="PTHR11661:SF1">
    <property type="entry name" value="LARGE RIBOSOMAL SUBUNIT PROTEIN UL11M"/>
    <property type="match status" value="1"/>
</dbReference>
<dbReference type="Pfam" id="PF00298">
    <property type="entry name" value="Ribosomal_L11"/>
    <property type="match status" value="1"/>
</dbReference>
<dbReference type="Pfam" id="PF03946">
    <property type="entry name" value="Ribosomal_L11_N"/>
    <property type="match status" value="1"/>
</dbReference>
<dbReference type="SMART" id="SM00649">
    <property type="entry name" value="RL11"/>
    <property type="match status" value="1"/>
</dbReference>
<dbReference type="SUPFAM" id="SSF54747">
    <property type="entry name" value="Ribosomal L11/L12e N-terminal domain"/>
    <property type="match status" value="1"/>
</dbReference>
<dbReference type="SUPFAM" id="SSF46906">
    <property type="entry name" value="Ribosomal protein L11, C-terminal domain"/>
    <property type="match status" value="1"/>
</dbReference>
<dbReference type="PROSITE" id="PS00359">
    <property type="entry name" value="RIBOSOMAL_L11"/>
    <property type="match status" value="1"/>
</dbReference>
<organism>
    <name type="scientific">Burkholderia mallei (strain ATCC 23344)</name>
    <dbReference type="NCBI Taxonomy" id="243160"/>
    <lineage>
        <taxon>Bacteria</taxon>
        <taxon>Pseudomonadati</taxon>
        <taxon>Pseudomonadota</taxon>
        <taxon>Betaproteobacteria</taxon>
        <taxon>Burkholderiales</taxon>
        <taxon>Burkholderiaceae</taxon>
        <taxon>Burkholderia</taxon>
        <taxon>pseudomallei group</taxon>
    </lineage>
</organism>
<protein>
    <recommendedName>
        <fullName evidence="1">Large ribosomal subunit protein uL11</fullName>
    </recommendedName>
    <alternativeName>
        <fullName evidence="2">50S ribosomal protein L11</fullName>
    </alternativeName>
</protein>
<reference key="1">
    <citation type="journal article" date="2004" name="Proc. Natl. Acad. Sci. U.S.A.">
        <title>Structural flexibility in the Burkholderia mallei genome.</title>
        <authorList>
            <person name="Nierman W.C."/>
            <person name="DeShazer D."/>
            <person name="Kim H.S."/>
            <person name="Tettelin H."/>
            <person name="Nelson K.E."/>
            <person name="Feldblyum T.V."/>
            <person name="Ulrich R.L."/>
            <person name="Ronning C.M."/>
            <person name="Brinkac L.M."/>
            <person name="Daugherty S.C."/>
            <person name="Davidsen T.D."/>
            <person name="DeBoy R.T."/>
            <person name="Dimitrov G."/>
            <person name="Dodson R.J."/>
            <person name="Durkin A.S."/>
            <person name="Gwinn M.L."/>
            <person name="Haft D.H."/>
            <person name="Khouri H.M."/>
            <person name="Kolonay J.F."/>
            <person name="Madupu R."/>
            <person name="Mohammoud Y."/>
            <person name="Nelson W.C."/>
            <person name="Radune D."/>
            <person name="Romero C.M."/>
            <person name="Sarria S."/>
            <person name="Selengut J."/>
            <person name="Shamblin C."/>
            <person name="Sullivan S.A."/>
            <person name="White O."/>
            <person name="Yu Y."/>
            <person name="Zafar N."/>
            <person name="Zhou L."/>
            <person name="Fraser C.M."/>
        </authorList>
    </citation>
    <scope>NUCLEOTIDE SEQUENCE [LARGE SCALE GENOMIC DNA]</scope>
    <source>
        <strain>ATCC 23344</strain>
    </source>
</reference>
<feature type="chain" id="PRO_0000104262" description="Large ribosomal subunit protein uL11">
    <location>
        <begin position="1"/>
        <end position="143"/>
    </location>
</feature>
<keyword id="KW-0488">Methylation</keyword>
<keyword id="KW-1185">Reference proteome</keyword>
<keyword id="KW-0687">Ribonucleoprotein</keyword>
<keyword id="KW-0689">Ribosomal protein</keyword>
<keyword id="KW-0694">RNA-binding</keyword>
<keyword id="KW-0699">rRNA-binding</keyword>
<accession>Q62GJ3</accession>
<comment type="function">
    <text evidence="1">Forms part of the ribosomal stalk which helps the ribosome interact with GTP-bound translation factors.</text>
</comment>
<comment type="subunit">
    <text evidence="1">Part of the ribosomal stalk of the 50S ribosomal subunit. Interacts with L10 and the large rRNA to form the base of the stalk. L10 forms an elongated spine to which L12 dimers bind in a sequential fashion forming a multimeric L10(L12)X complex.</text>
</comment>
<comment type="PTM">
    <text evidence="1">One or more lysine residues are methylated.</text>
</comment>
<comment type="similarity">
    <text evidence="1">Belongs to the universal ribosomal protein uL11 family.</text>
</comment>
<name>RL11_BURMA</name>
<proteinExistence type="inferred from homology"/>
<evidence type="ECO:0000255" key="1">
    <source>
        <dbReference type="HAMAP-Rule" id="MF_00736"/>
    </source>
</evidence>
<evidence type="ECO:0000305" key="2"/>
<sequence length="143" mass="14959">MAKKIVGFIKLQIPAGKANPSPPVGPALGQRGLNIMEFCKAFNAQTQGMEPGLPVPVVITAYADKSFTFVMKTPPATVLIKKAAKVDKGSSKPHTDKVGKITRAQAEEIAKTKMPDLTAADLDAAVRTIAGSARSMGITVEGV</sequence>
<gene>
    <name evidence="1" type="primary">rplK</name>
    <name type="ordered locus">BMA2645</name>
</gene>